<gene>
    <name evidence="1" type="primary">rnhA</name>
    <name type="ordered locus">BPEN_231</name>
</gene>
<name>RNH_BLOPB</name>
<keyword id="KW-0963">Cytoplasm</keyword>
<keyword id="KW-0255">Endonuclease</keyword>
<keyword id="KW-0378">Hydrolase</keyword>
<keyword id="KW-0460">Magnesium</keyword>
<keyword id="KW-0479">Metal-binding</keyword>
<keyword id="KW-0540">Nuclease</keyword>
<keyword id="KW-1185">Reference proteome</keyword>
<comment type="function">
    <text evidence="1">Endonuclease that specifically degrades the RNA of RNA-DNA hybrids.</text>
</comment>
<comment type="catalytic activity">
    <reaction evidence="1">
        <text>Endonucleolytic cleavage to 5'-phosphomonoester.</text>
        <dbReference type="EC" id="3.1.26.4"/>
    </reaction>
</comment>
<comment type="cofactor">
    <cofactor evidence="1">
        <name>Mg(2+)</name>
        <dbReference type="ChEBI" id="CHEBI:18420"/>
    </cofactor>
    <text evidence="1">Binds 1 Mg(2+) ion per subunit. May bind a second metal ion at a regulatory site, or after substrate binding.</text>
</comment>
<comment type="subunit">
    <text evidence="1">Monomer.</text>
</comment>
<comment type="subcellular location">
    <subcellularLocation>
        <location evidence="1">Cytoplasm</location>
    </subcellularLocation>
</comment>
<comment type="similarity">
    <text evidence="1">Belongs to the RNase H family.</text>
</comment>
<proteinExistence type="inferred from homology"/>
<protein>
    <recommendedName>
        <fullName evidence="1">Ribonuclease H</fullName>
        <shortName evidence="1">RNase H</shortName>
        <ecNumber evidence="1">3.1.26.4</ecNumber>
    </recommendedName>
</protein>
<sequence>MYKKIEIFTDGSCLGNPGPGGCAAILRYKQHKKEFSIGYRLTTNNRMELMAAIIALESLKNPCQIILNTDSQYLLHGITQWIHIWKKHHWKTSEEKLVKNIDLWQRLDVAIQIHSIIHWNWLKSHTGHPDNERCDQLARLAAKCPINEDFY</sequence>
<organism>
    <name type="scientific">Blochmanniella pennsylvanica (strain BPEN)</name>
    <dbReference type="NCBI Taxonomy" id="291272"/>
    <lineage>
        <taxon>Bacteria</taxon>
        <taxon>Pseudomonadati</taxon>
        <taxon>Pseudomonadota</taxon>
        <taxon>Gammaproteobacteria</taxon>
        <taxon>Enterobacterales</taxon>
        <taxon>Enterobacteriaceae</taxon>
        <taxon>ant endosymbionts</taxon>
        <taxon>Candidatus Blochmanniella</taxon>
    </lineage>
</organism>
<feature type="chain" id="PRO_1000074635" description="Ribonuclease H">
    <location>
        <begin position="1"/>
        <end position="151"/>
    </location>
</feature>
<feature type="domain" description="RNase H type-1" evidence="2">
    <location>
        <begin position="1"/>
        <end position="143"/>
    </location>
</feature>
<feature type="binding site" evidence="1">
    <location>
        <position position="10"/>
    </location>
    <ligand>
        <name>Mg(2+)</name>
        <dbReference type="ChEBI" id="CHEBI:18420"/>
        <label>1</label>
    </ligand>
</feature>
<feature type="binding site" evidence="1">
    <location>
        <position position="10"/>
    </location>
    <ligand>
        <name>Mg(2+)</name>
        <dbReference type="ChEBI" id="CHEBI:18420"/>
        <label>2</label>
    </ligand>
</feature>
<feature type="binding site" evidence="1">
    <location>
        <position position="48"/>
    </location>
    <ligand>
        <name>Mg(2+)</name>
        <dbReference type="ChEBI" id="CHEBI:18420"/>
        <label>1</label>
    </ligand>
</feature>
<feature type="binding site" evidence="1">
    <location>
        <position position="70"/>
    </location>
    <ligand>
        <name>Mg(2+)</name>
        <dbReference type="ChEBI" id="CHEBI:18420"/>
        <label>1</label>
    </ligand>
</feature>
<feature type="binding site" evidence="1">
    <location>
        <position position="135"/>
    </location>
    <ligand>
        <name>Mg(2+)</name>
        <dbReference type="ChEBI" id="CHEBI:18420"/>
        <label>2</label>
    </ligand>
</feature>
<evidence type="ECO:0000255" key="1">
    <source>
        <dbReference type="HAMAP-Rule" id="MF_00042"/>
    </source>
</evidence>
<evidence type="ECO:0000255" key="2">
    <source>
        <dbReference type="PROSITE-ProRule" id="PRU00408"/>
    </source>
</evidence>
<reference key="1">
    <citation type="journal article" date="2005" name="Genome Res.">
        <title>Genome sequence of Blochmannia pennsylvanicus indicates parallel evolutionary trends among bacterial mutualists of insects.</title>
        <authorList>
            <person name="Degnan P.H."/>
            <person name="Lazarus A.B."/>
            <person name="Wernegreen J.J."/>
        </authorList>
    </citation>
    <scope>NUCLEOTIDE SEQUENCE [LARGE SCALE GENOMIC DNA]</scope>
    <source>
        <strain>BPEN</strain>
    </source>
</reference>
<dbReference type="EC" id="3.1.26.4" evidence="1"/>
<dbReference type="EMBL" id="CP000016">
    <property type="protein sequence ID" value="AAZ40863.1"/>
    <property type="molecule type" value="Genomic_DNA"/>
</dbReference>
<dbReference type="RefSeq" id="WP_011282770.1">
    <property type="nucleotide sequence ID" value="NC_007292.1"/>
</dbReference>
<dbReference type="SMR" id="Q493H7"/>
<dbReference type="STRING" id="291272.BPEN_231"/>
<dbReference type="KEGG" id="bpn:BPEN_231"/>
<dbReference type="eggNOG" id="COG0328">
    <property type="taxonomic scope" value="Bacteria"/>
</dbReference>
<dbReference type="HOGENOM" id="CLU_030894_6_0_6"/>
<dbReference type="OrthoDB" id="7845843at2"/>
<dbReference type="Proteomes" id="UP000007794">
    <property type="component" value="Chromosome"/>
</dbReference>
<dbReference type="GO" id="GO:0005737">
    <property type="term" value="C:cytoplasm"/>
    <property type="evidence" value="ECO:0007669"/>
    <property type="project" value="UniProtKB-SubCell"/>
</dbReference>
<dbReference type="GO" id="GO:0000287">
    <property type="term" value="F:magnesium ion binding"/>
    <property type="evidence" value="ECO:0007669"/>
    <property type="project" value="UniProtKB-UniRule"/>
</dbReference>
<dbReference type="GO" id="GO:0003676">
    <property type="term" value="F:nucleic acid binding"/>
    <property type="evidence" value="ECO:0007669"/>
    <property type="project" value="InterPro"/>
</dbReference>
<dbReference type="GO" id="GO:0004523">
    <property type="term" value="F:RNA-DNA hybrid ribonuclease activity"/>
    <property type="evidence" value="ECO:0007669"/>
    <property type="project" value="UniProtKB-UniRule"/>
</dbReference>
<dbReference type="GO" id="GO:0043137">
    <property type="term" value="P:DNA replication, removal of RNA primer"/>
    <property type="evidence" value="ECO:0007669"/>
    <property type="project" value="TreeGrafter"/>
</dbReference>
<dbReference type="CDD" id="cd09278">
    <property type="entry name" value="RNase_HI_prokaryote_like"/>
    <property type="match status" value="1"/>
</dbReference>
<dbReference type="FunFam" id="3.30.420.10:FF:000089">
    <property type="entry name" value="Ribonuclease H"/>
    <property type="match status" value="1"/>
</dbReference>
<dbReference type="Gene3D" id="3.30.420.10">
    <property type="entry name" value="Ribonuclease H-like superfamily/Ribonuclease H"/>
    <property type="match status" value="1"/>
</dbReference>
<dbReference type="HAMAP" id="MF_00042">
    <property type="entry name" value="RNase_H"/>
    <property type="match status" value="1"/>
</dbReference>
<dbReference type="InterPro" id="IPR050092">
    <property type="entry name" value="RNase_H"/>
</dbReference>
<dbReference type="InterPro" id="IPR012337">
    <property type="entry name" value="RNaseH-like_sf"/>
</dbReference>
<dbReference type="InterPro" id="IPR002156">
    <property type="entry name" value="RNaseH_domain"/>
</dbReference>
<dbReference type="InterPro" id="IPR036397">
    <property type="entry name" value="RNaseH_sf"/>
</dbReference>
<dbReference type="InterPro" id="IPR022892">
    <property type="entry name" value="RNaseHI"/>
</dbReference>
<dbReference type="NCBIfam" id="NF001236">
    <property type="entry name" value="PRK00203.1"/>
    <property type="match status" value="1"/>
</dbReference>
<dbReference type="PANTHER" id="PTHR10642">
    <property type="entry name" value="RIBONUCLEASE H1"/>
    <property type="match status" value="1"/>
</dbReference>
<dbReference type="PANTHER" id="PTHR10642:SF26">
    <property type="entry name" value="RIBONUCLEASE H1"/>
    <property type="match status" value="1"/>
</dbReference>
<dbReference type="Pfam" id="PF00075">
    <property type="entry name" value="RNase_H"/>
    <property type="match status" value="1"/>
</dbReference>
<dbReference type="SUPFAM" id="SSF53098">
    <property type="entry name" value="Ribonuclease H-like"/>
    <property type="match status" value="1"/>
</dbReference>
<dbReference type="PROSITE" id="PS50879">
    <property type="entry name" value="RNASE_H_1"/>
    <property type="match status" value="1"/>
</dbReference>
<accession>Q493H7</accession>